<feature type="chain" id="PRO_0000365349" description="Eukaryotic translation initiation factor 3 subunit I">
    <location>
        <begin position="1"/>
        <end position="326"/>
    </location>
</feature>
<feature type="repeat" description="WD 1">
    <location>
        <begin position="8"/>
        <end position="47"/>
    </location>
</feature>
<feature type="repeat" description="WD 2">
    <location>
        <begin position="50"/>
        <end position="89"/>
    </location>
</feature>
<feature type="repeat" description="WD 3">
    <location>
        <begin position="145"/>
        <end position="184"/>
    </location>
</feature>
<feature type="repeat" description="WD 4">
    <location>
        <begin position="188"/>
        <end position="227"/>
    </location>
</feature>
<feature type="repeat" description="WD 5">
    <location>
        <begin position="285"/>
        <end position="326"/>
    </location>
</feature>
<dbReference type="EMBL" id="CM000361">
    <property type="protein sequence ID" value="EDX03770.1"/>
    <property type="molecule type" value="Genomic_DNA"/>
</dbReference>
<dbReference type="SMR" id="B4Q354"/>
<dbReference type="STRING" id="7240.B4Q354"/>
<dbReference type="EnsemblMetazoa" id="FBtr0222585">
    <property type="protein sequence ID" value="FBpp0221077"/>
    <property type="gene ID" value="FBgn0194072"/>
</dbReference>
<dbReference type="EnsemblMetazoa" id="XM_002078149.4">
    <property type="protein sequence ID" value="XP_002078185.1"/>
    <property type="gene ID" value="LOC6731024"/>
</dbReference>
<dbReference type="GeneID" id="6731024"/>
<dbReference type="CTD" id="8668"/>
<dbReference type="HOGENOM" id="CLU_043845_0_1_1"/>
<dbReference type="OMA" id="VWFSHNG"/>
<dbReference type="OrthoDB" id="24966at2759"/>
<dbReference type="PhylomeDB" id="B4Q354"/>
<dbReference type="ChiTaRS" id="Trip1">
    <property type="organism name" value="fly"/>
</dbReference>
<dbReference type="Proteomes" id="UP000000304">
    <property type="component" value="Chromosome 2L"/>
</dbReference>
<dbReference type="Bgee" id="FBgn0194072">
    <property type="expression patterns" value="Expressed in embryo and 3 other cell types or tissues"/>
</dbReference>
<dbReference type="GO" id="GO:0016282">
    <property type="term" value="C:eukaryotic 43S preinitiation complex"/>
    <property type="evidence" value="ECO:0007669"/>
    <property type="project" value="UniProtKB-UniRule"/>
</dbReference>
<dbReference type="GO" id="GO:0033290">
    <property type="term" value="C:eukaryotic 48S preinitiation complex"/>
    <property type="evidence" value="ECO:0007669"/>
    <property type="project" value="UniProtKB-UniRule"/>
</dbReference>
<dbReference type="GO" id="GO:0071541">
    <property type="term" value="C:eukaryotic translation initiation factor 3 complex, eIF3m"/>
    <property type="evidence" value="ECO:0007669"/>
    <property type="project" value="TreeGrafter"/>
</dbReference>
<dbReference type="GO" id="GO:0003723">
    <property type="term" value="F:RNA binding"/>
    <property type="evidence" value="ECO:0007669"/>
    <property type="project" value="TreeGrafter"/>
</dbReference>
<dbReference type="GO" id="GO:0003743">
    <property type="term" value="F:translation initiation factor activity"/>
    <property type="evidence" value="ECO:0007669"/>
    <property type="project" value="UniProtKB-UniRule"/>
</dbReference>
<dbReference type="GO" id="GO:0001732">
    <property type="term" value="P:formation of cytoplasmic translation initiation complex"/>
    <property type="evidence" value="ECO:0007669"/>
    <property type="project" value="UniProtKB-UniRule"/>
</dbReference>
<dbReference type="FunFam" id="2.130.10.10:FF:000127">
    <property type="entry name" value="Eukaryotic translation initiation factor 3 subunit I"/>
    <property type="match status" value="1"/>
</dbReference>
<dbReference type="Gene3D" id="2.130.10.10">
    <property type="entry name" value="YVTN repeat-like/Quinoprotein amine dehydrogenase"/>
    <property type="match status" value="1"/>
</dbReference>
<dbReference type="HAMAP" id="MF_03008">
    <property type="entry name" value="eIF3i"/>
    <property type="match status" value="1"/>
</dbReference>
<dbReference type="InterPro" id="IPR027525">
    <property type="entry name" value="eIF3i"/>
</dbReference>
<dbReference type="InterPro" id="IPR015943">
    <property type="entry name" value="WD40/YVTN_repeat-like_dom_sf"/>
</dbReference>
<dbReference type="InterPro" id="IPR019775">
    <property type="entry name" value="WD40_repeat_CS"/>
</dbReference>
<dbReference type="InterPro" id="IPR036322">
    <property type="entry name" value="WD40_repeat_dom_sf"/>
</dbReference>
<dbReference type="InterPro" id="IPR001680">
    <property type="entry name" value="WD40_rpt"/>
</dbReference>
<dbReference type="PANTHER" id="PTHR19877">
    <property type="entry name" value="EUKARYOTIC TRANSLATION INITIATION FACTOR 3 SUBUNIT I"/>
    <property type="match status" value="1"/>
</dbReference>
<dbReference type="PANTHER" id="PTHR19877:SF1">
    <property type="entry name" value="EUKARYOTIC TRANSLATION INITIATION FACTOR 3 SUBUNIT I"/>
    <property type="match status" value="1"/>
</dbReference>
<dbReference type="Pfam" id="PF24805">
    <property type="entry name" value="EIF3I"/>
    <property type="match status" value="1"/>
</dbReference>
<dbReference type="SMART" id="SM00320">
    <property type="entry name" value="WD40"/>
    <property type="match status" value="6"/>
</dbReference>
<dbReference type="SUPFAM" id="SSF50978">
    <property type="entry name" value="WD40 repeat-like"/>
    <property type="match status" value="1"/>
</dbReference>
<dbReference type="PROSITE" id="PS00678">
    <property type="entry name" value="WD_REPEATS_1"/>
    <property type="match status" value="2"/>
</dbReference>
<dbReference type="PROSITE" id="PS50082">
    <property type="entry name" value="WD_REPEATS_2"/>
    <property type="match status" value="5"/>
</dbReference>
<dbReference type="PROSITE" id="PS50294">
    <property type="entry name" value="WD_REPEATS_REGION"/>
    <property type="match status" value="2"/>
</dbReference>
<comment type="function">
    <text evidence="1">Component of the eukaryotic translation initiation factor 3 (eIF-3) complex, which is involved in protein synthesis of a specialized repertoire of mRNAs and, together with other initiation factors, stimulates binding of mRNA and methionyl-tRNAi to the 40S ribosome. The eIF-3 complex specifically targets and initiates translation of a subset of mRNAs involved in cell proliferation.</text>
</comment>
<comment type="subunit">
    <text evidence="1">Component of the eukaryotic translation initiation factor 3 (eIF-3) complex. The eIF-3 complex interacts with pix.</text>
</comment>
<comment type="subcellular location">
    <subcellularLocation>
        <location evidence="1">Cytoplasm</location>
    </subcellularLocation>
</comment>
<comment type="similarity">
    <text evidence="1">Belongs to the eIF-3 subunit I family.</text>
</comment>
<keyword id="KW-0963">Cytoplasm</keyword>
<keyword id="KW-0396">Initiation factor</keyword>
<keyword id="KW-0648">Protein biosynthesis</keyword>
<keyword id="KW-1185">Reference proteome</keyword>
<keyword id="KW-0677">Repeat</keyword>
<keyword id="KW-0853">WD repeat</keyword>
<gene>
    <name evidence="1" type="primary">eIF3i</name>
    <name evidence="1" type="synonym">eif3-S2</name>
    <name evidence="1" type="synonym">Trip1</name>
    <name type="ORF">GD22675</name>
</gene>
<reference key="1">
    <citation type="journal article" date="2007" name="Nature">
        <title>Evolution of genes and genomes on the Drosophila phylogeny.</title>
        <authorList>
            <consortium name="Drosophila 12 genomes consortium"/>
        </authorList>
    </citation>
    <scope>NUCLEOTIDE SEQUENCE [LARGE SCALE GENOMIC DNA]</scope>
</reference>
<accession>B4Q354</accession>
<evidence type="ECO:0000255" key="1">
    <source>
        <dbReference type="HAMAP-Rule" id="MF_03008"/>
    </source>
</evidence>
<proteinExistence type="inferred from homology"/>
<organism>
    <name type="scientific">Drosophila simulans</name>
    <name type="common">Fruit fly</name>
    <dbReference type="NCBI Taxonomy" id="7240"/>
    <lineage>
        <taxon>Eukaryota</taxon>
        <taxon>Metazoa</taxon>
        <taxon>Ecdysozoa</taxon>
        <taxon>Arthropoda</taxon>
        <taxon>Hexapoda</taxon>
        <taxon>Insecta</taxon>
        <taxon>Pterygota</taxon>
        <taxon>Neoptera</taxon>
        <taxon>Endopterygota</taxon>
        <taxon>Diptera</taxon>
        <taxon>Brachycera</taxon>
        <taxon>Muscomorpha</taxon>
        <taxon>Ephydroidea</taxon>
        <taxon>Drosophilidae</taxon>
        <taxon>Drosophila</taxon>
        <taxon>Sophophora</taxon>
    </lineage>
</organism>
<name>EIF3I_DROSI</name>
<protein>
    <recommendedName>
        <fullName evidence="1">Eukaryotic translation initiation factor 3 subunit I</fullName>
        <shortName evidence="1">eIF3i</shortName>
    </recommendedName>
    <alternativeName>
        <fullName evidence="1">Eukaryotic translation initiation factor 3 subunit 2</fullName>
    </alternativeName>
    <alternativeName>
        <fullName>TRIP-1 homolog</fullName>
    </alternativeName>
</protein>
<sequence>MRPLMLQGHERSITQIKYNREGDLLFSCSKDQKPNVWYSLNGERLGTYDGHQGAVWCLDVDWESRKLITGAGDMTAKIWDVEYGTVIASIPTKSSVRTSNFSFSGNQAAYSTDKAMGQSCELFLIDVRNADSSLSEQEPTLRIPMTESKITSMLWGPLDETIITGHDNGNIAIWDIRKGQKVVDSGTDHSAGINDMQLSKDGTMFVTASRDTTAKLFDSESLMCLKTYKTERPVNSAAISPIMDHVVLGGGQDAMEVTTTSTKAGKFDSRFFHLIYEEEFARLKGHFGPINSLAFHPDGKSYASGGEDGFVRVQTFDSTYFENIFE</sequence>